<proteinExistence type="inferred from homology"/>
<name>RSMG_FRACC</name>
<gene>
    <name evidence="1" type="primary">rsmG</name>
    <name type="ordered locus">Francci3_4542</name>
</gene>
<protein>
    <recommendedName>
        <fullName evidence="1">Ribosomal RNA small subunit methyltransferase G</fullName>
        <ecNumber evidence="1">2.1.1.-</ecNumber>
    </recommendedName>
    <alternativeName>
        <fullName evidence="1">16S rRNA 7-methylguanosine methyltransferase</fullName>
        <shortName evidence="1">16S rRNA m7G methyltransferase</shortName>
    </alternativeName>
</protein>
<reference key="1">
    <citation type="journal article" date="2007" name="Genome Res.">
        <title>Genome characteristics of facultatively symbiotic Frankia sp. strains reflect host range and host plant biogeography.</title>
        <authorList>
            <person name="Normand P."/>
            <person name="Lapierre P."/>
            <person name="Tisa L.S."/>
            <person name="Gogarten J.P."/>
            <person name="Alloisio N."/>
            <person name="Bagnarol E."/>
            <person name="Bassi C.A."/>
            <person name="Berry A.M."/>
            <person name="Bickhart D.M."/>
            <person name="Choisne N."/>
            <person name="Couloux A."/>
            <person name="Cournoyer B."/>
            <person name="Cruveiller S."/>
            <person name="Daubin V."/>
            <person name="Demange N."/>
            <person name="Francino M.P."/>
            <person name="Goltsman E."/>
            <person name="Huang Y."/>
            <person name="Kopp O.R."/>
            <person name="Labarre L."/>
            <person name="Lapidus A."/>
            <person name="Lavire C."/>
            <person name="Marechal J."/>
            <person name="Martinez M."/>
            <person name="Mastronunzio J.E."/>
            <person name="Mullin B.C."/>
            <person name="Niemann J."/>
            <person name="Pujic P."/>
            <person name="Rawnsley T."/>
            <person name="Rouy Z."/>
            <person name="Schenowitz C."/>
            <person name="Sellstedt A."/>
            <person name="Tavares F."/>
            <person name="Tomkins J.P."/>
            <person name="Vallenet D."/>
            <person name="Valverde C."/>
            <person name="Wall L.G."/>
            <person name="Wang Y."/>
            <person name="Medigue C."/>
            <person name="Benson D.R."/>
        </authorList>
    </citation>
    <scope>NUCLEOTIDE SEQUENCE [LARGE SCALE GENOMIC DNA]</scope>
    <source>
        <strain>DSM 45818 / CECT 9043 / HFP020203 / CcI3</strain>
    </source>
</reference>
<organism>
    <name type="scientific">Frankia casuarinae (strain DSM 45818 / CECT 9043 / HFP020203 / CcI3)</name>
    <dbReference type="NCBI Taxonomy" id="106370"/>
    <lineage>
        <taxon>Bacteria</taxon>
        <taxon>Bacillati</taxon>
        <taxon>Actinomycetota</taxon>
        <taxon>Actinomycetes</taxon>
        <taxon>Frankiales</taxon>
        <taxon>Frankiaceae</taxon>
        <taxon>Frankia</taxon>
    </lineage>
</organism>
<feature type="chain" id="PRO_0000335354" description="Ribosomal RNA small subunit methyltransferase G">
    <location>
        <begin position="1"/>
        <end position="265"/>
    </location>
</feature>
<feature type="region of interest" description="Disordered" evidence="2">
    <location>
        <begin position="212"/>
        <end position="265"/>
    </location>
</feature>
<feature type="compositionally biased region" description="Basic and acidic residues" evidence="2">
    <location>
        <begin position="220"/>
        <end position="257"/>
    </location>
</feature>
<feature type="binding site" evidence="1">
    <location>
        <position position="75"/>
    </location>
    <ligand>
        <name>S-adenosyl-L-methionine</name>
        <dbReference type="ChEBI" id="CHEBI:59789"/>
    </ligand>
</feature>
<feature type="binding site" evidence="1">
    <location>
        <position position="80"/>
    </location>
    <ligand>
        <name>S-adenosyl-L-methionine</name>
        <dbReference type="ChEBI" id="CHEBI:59789"/>
    </ligand>
</feature>
<feature type="binding site" evidence="1">
    <location>
        <position position="145"/>
    </location>
    <ligand>
        <name>S-adenosyl-L-methionine</name>
        <dbReference type="ChEBI" id="CHEBI:59789"/>
    </ligand>
</feature>
<keyword id="KW-0963">Cytoplasm</keyword>
<keyword id="KW-0489">Methyltransferase</keyword>
<keyword id="KW-1185">Reference proteome</keyword>
<keyword id="KW-0698">rRNA processing</keyword>
<keyword id="KW-0949">S-adenosyl-L-methionine</keyword>
<keyword id="KW-0808">Transferase</keyword>
<sequence>MTGLPDAPEVPPVAVEIFGTRTGSAARYVELLATDGVERGLIGPRETDRLWDRHVLNCAVLADVVPVQADVVDVGSGAGLPGIPLALARPDLRVVLLEPMERRCRFLHEVVATIGLEDQISVVRGRAPDAGIGPDGRRFGIAVARAVAPLERLGAILFPMLRPGGVMLAMRGSRILEELQDARSGLGTQGWHPVDVVRCGEGRVEEPARVLRAVRSSQRTRAESRGGRGDGERHDGRQVRRTSRDSLRSREVGRDQPTRGQSRST</sequence>
<evidence type="ECO:0000255" key="1">
    <source>
        <dbReference type="HAMAP-Rule" id="MF_00074"/>
    </source>
</evidence>
<evidence type="ECO:0000256" key="2">
    <source>
        <dbReference type="SAM" id="MobiDB-lite"/>
    </source>
</evidence>
<comment type="function">
    <text evidence="1">Specifically methylates the N7 position of guanine in position 518 of 16S rRNA.</text>
</comment>
<comment type="subcellular location">
    <subcellularLocation>
        <location evidence="1">Cytoplasm</location>
    </subcellularLocation>
</comment>
<comment type="similarity">
    <text evidence="1">Belongs to the methyltransferase superfamily. RNA methyltransferase RsmG family.</text>
</comment>
<accession>Q2J4A4</accession>
<dbReference type="EC" id="2.1.1.-" evidence="1"/>
<dbReference type="EMBL" id="CP000249">
    <property type="protein sequence ID" value="ABD13888.1"/>
    <property type="molecule type" value="Genomic_DNA"/>
</dbReference>
<dbReference type="RefSeq" id="WP_011438896.1">
    <property type="nucleotide sequence ID" value="NZ_LRTJ01000003.1"/>
</dbReference>
<dbReference type="SMR" id="Q2J4A4"/>
<dbReference type="STRING" id="106370.Francci3_4542"/>
<dbReference type="KEGG" id="fra:Francci3_4542"/>
<dbReference type="eggNOG" id="COG0357">
    <property type="taxonomic scope" value="Bacteria"/>
</dbReference>
<dbReference type="HOGENOM" id="CLU_065341_5_0_11"/>
<dbReference type="OrthoDB" id="9808773at2"/>
<dbReference type="PhylomeDB" id="Q2J4A4"/>
<dbReference type="Proteomes" id="UP000001937">
    <property type="component" value="Chromosome"/>
</dbReference>
<dbReference type="GO" id="GO:0005829">
    <property type="term" value="C:cytosol"/>
    <property type="evidence" value="ECO:0007669"/>
    <property type="project" value="TreeGrafter"/>
</dbReference>
<dbReference type="GO" id="GO:0070043">
    <property type="term" value="F:rRNA (guanine-N7-)-methyltransferase activity"/>
    <property type="evidence" value="ECO:0007669"/>
    <property type="project" value="UniProtKB-UniRule"/>
</dbReference>
<dbReference type="CDD" id="cd02440">
    <property type="entry name" value="AdoMet_MTases"/>
    <property type="match status" value="1"/>
</dbReference>
<dbReference type="Gene3D" id="3.40.50.150">
    <property type="entry name" value="Vaccinia Virus protein VP39"/>
    <property type="match status" value="1"/>
</dbReference>
<dbReference type="HAMAP" id="MF_00074">
    <property type="entry name" value="16SrRNA_methyltr_G"/>
    <property type="match status" value="1"/>
</dbReference>
<dbReference type="InterPro" id="IPR003682">
    <property type="entry name" value="rRNA_ssu_MeTfrase_G"/>
</dbReference>
<dbReference type="InterPro" id="IPR029063">
    <property type="entry name" value="SAM-dependent_MTases_sf"/>
</dbReference>
<dbReference type="NCBIfam" id="TIGR00138">
    <property type="entry name" value="rsmG_gidB"/>
    <property type="match status" value="1"/>
</dbReference>
<dbReference type="PANTHER" id="PTHR31760">
    <property type="entry name" value="S-ADENOSYL-L-METHIONINE-DEPENDENT METHYLTRANSFERASES SUPERFAMILY PROTEIN"/>
    <property type="match status" value="1"/>
</dbReference>
<dbReference type="PANTHER" id="PTHR31760:SF0">
    <property type="entry name" value="S-ADENOSYL-L-METHIONINE-DEPENDENT METHYLTRANSFERASES SUPERFAMILY PROTEIN"/>
    <property type="match status" value="1"/>
</dbReference>
<dbReference type="Pfam" id="PF02527">
    <property type="entry name" value="GidB"/>
    <property type="match status" value="1"/>
</dbReference>
<dbReference type="SUPFAM" id="SSF53335">
    <property type="entry name" value="S-adenosyl-L-methionine-dependent methyltransferases"/>
    <property type="match status" value="1"/>
</dbReference>